<accession>Q8FHE6</accession>
<feature type="chain" id="PRO_0000209324" description="Probable sugar efflux transporter">
    <location>
        <begin position="1"/>
        <end position="396"/>
    </location>
</feature>
<feature type="topological domain" description="Cytoplasmic" evidence="1">
    <location>
        <begin position="1"/>
        <end position="14"/>
    </location>
</feature>
<feature type="transmembrane region" description="Helical" evidence="2">
    <location>
        <begin position="15"/>
        <end position="35"/>
    </location>
</feature>
<feature type="topological domain" description="Periplasmic" evidence="1">
    <location>
        <begin position="36"/>
        <end position="49"/>
    </location>
</feature>
<feature type="transmembrane region" description="Helical" evidence="2">
    <location>
        <begin position="50"/>
        <end position="70"/>
    </location>
</feature>
<feature type="topological domain" description="Cytoplasmic" evidence="1">
    <location>
        <begin position="71"/>
        <end position="80"/>
    </location>
</feature>
<feature type="transmembrane region" description="Helical" evidence="2">
    <location>
        <begin position="81"/>
        <end position="101"/>
    </location>
</feature>
<feature type="topological domain" description="Periplasmic" evidence="1">
    <location>
        <position position="102"/>
    </location>
</feature>
<feature type="transmembrane region" description="Helical" evidence="2">
    <location>
        <begin position="103"/>
        <end position="123"/>
    </location>
</feature>
<feature type="topological domain" description="Cytoplasmic" evidence="1">
    <location>
        <begin position="124"/>
        <end position="135"/>
    </location>
</feature>
<feature type="transmembrane region" description="Helical" evidence="2">
    <location>
        <begin position="136"/>
        <end position="156"/>
    </location>
</feature>
<feature type="topological domain" description="Periplasmic" evidence="1">
    <location>
        <begin position="157"/>
        <end position="169"/>
    </location>
</feature>
<feature type="transmembrane region" description="Helical" evidence="2">
    <location>
        <begin position="170"/>
        <end position="190"/>
    </location>
</feature>
<feature type="topological domain" description="Cytoplasmic" evidence="1">
    <location>
        <begin position="191"/>
        <end position="208"/>
    </location>
</feature>
<feature type="transmembrane region" description="Helical" evidence="2">
    <location>
        <begin position="209"/>
        <end position="229"/>
    </location>
</feature>
<feature type="topological domain" description="Periplasmic" evidence="1">
    <location>
        <begin position="230"/>
        <end position="245"/>
    </location>
</feature>
<feature type="transmembrane region" description="Helical" evidence="2">
    <location>
        <begin position="246"/>
        <end position="266"/>
    </location>
</feature>
<feature type="topological domain" description="Cytoplasmic" evidence="1">
    <location>
        <begin position="267"/>
        <end position="274"/>
    </location>
</feature>
<feature type="transmembrane region" description="Helical" evidence="2">
    <location>
        <begin position="275"/>
        <end position="295"/>
    </location>
</feature>
<feature type="topological domain" description="Periplasmic" evidence="1">
    <location>
        <begin position="296"/>
        <end position="298"/>
    </location>
</feature>
<feature type="transmembrane region" description="Helical" evidence="2">
    <location>
        <begin position="299"/>
        <end position="319"/>
    </location>
</feature>
<feature type="topological domain" description="Cytoplasmic" evidence="1">
    <location>
        <begin position="320"/>
        <end position="332"/>
    </location>
</feature>
<feature type="transmembrane region" description="Helical" evidence="2">
    <location>
        <begin position="333"/>
        <end position="353"/>
    </location>
</feature>
<feature type="topological domain" description="Periplasmic" evidence="1">
    <location>
        <begin position="354"/>
        <end position="363"/>
    </location>
</feature>
<feature type="transmembrane region" description="Helical" evidence="2">
    <location>
        <begin position="364"/>
        <end position="384"/>
    </location>
</feature>
<feature type="topological domain" description="Cytoplasmic" evidence="1">
    <location>
        <begin position="385"/>
        <end position="396"/>
    </location>
</feature>
<evidence type="ECO:0000255" key="1"/>
<evidence type="ECO:0000255" key="2">
    <source>
        <dbReference type="HAMAP-Rule" id="MF_00517"/>
    </source>
</evidence>
<proteinExistence type="inferred from homology"/>
<organism>
    <name type="scientific">Escherichia coli O6:H1 (strain CFT073 / ATCC 700928 / UPEC)</name>
    <dbReference type="NCBI Taxonomy" id="199310"/>
    <lineage>
        <taxon>Bacteria</taxon>
        <taxon>Pseudomonadati</taxon>
        <taxon>Pseudomonadota</taxon>
        <taxon>Gammaproteobacteria</taxon>
        <taxon>Enterobacterales</taxon>
        <taxon>Enterobacteriaceae</taxon>
        <taxon>Escherichia</taxon>
    </lineage>
</organism>
<comment type="function">
    <text evidence="2">Involved in the efflux of sugars. The physiological role may be the reduction of the intracellular concentration of toxic sugars or sugar metabolites.</text>
</comment>
<comment type="subcellular location">
    <subcellularLocation>
        <location evidence="2">Cell inner membrane</location>
        <topology evidence="2">Multi-pass membrane protein</topology>
    </subcellularLocation>
</comment>
<comment type="similarity">
    <text evidence="2">Belongs to the major facilitator superfamily. SotB (TC 2.A.1.2) family.</text>
</comment>
<gene>
    <name evidence="2" type="primary">sotB</name>
    <name type="ordered locus">c1950</name>
</gene>
<protein>
    <recommendedName>
        <fullName evidence="2">Probable sugar efflux transporter</fullName>
    </recommendedName>
</protein>
<keyword id="KW-0997">Cell inner membrane</keyword>
<keyword id="KW-1003">Cell membrane</keyword>
<keyword id="KW-0472">Membrane</keyword>
<keyword id="KW-1185">Reference proteome</keyword>
<keyword id="KW-0762">Sugar transport</keyword>
<keyword id="KW-0812">Transmembrane</keyword>
<keyword id="KW-1133">Transmembrane helix</keyword>
<keyword id="KW-0813">Transport</keyword>
<name>SOTB_ECOL6</name>
<sequence>MTTNTVSRKVAWLRVVTLAVAAFIFNTTEFVPVGLLSDIAHSFHMQTAQVGIMLTIYAWVVALMSLPFMLMTSQVERRKLLICLFVVFIASHVLSFLSWSFTVLVISRIGVAFAHAIFWSITASLAIRMAPAGKRAQALSLIATGTALAMVLGLPLGRIVGQYFGWRMTFFAIGIGALITLLCLIKLLPLLPSEHSGSLKSLPLLFRRPALMSIYLLTVVVVTAHYTAYSYIEPFVQNIAGFSANFATALLLLLGGAGIIGSVIFGKLGNQYASALVSTAIALLLVCLALLLPAANSEIHLGVLSIFWGIAMMIIGLGMQVKVLALAPDATDVAMALFSGIFNIGIGAGALVGNQVSLHWSMSMIGYVGAVPAFAALIWSIIIFRRWPVTLEEQTQ</sequence>
<dbReference type="EMBL" id="AE014075">
    <property type="protein sequence ID" value="AAN80407.1"/>
    <property type="molecule type" value="Genomic_DNA"/>
</dbReference>
<dbReference type="SMR" id="Q8FHE6"/>
<dbReference type="STRING" id="199310.c1950"/>
<dbReference type="KEGG" id="ecc:c1950"/>
<dbReference type="eggNOG" id="COG2814">
    <property type="taxonomic scope" value="Bacteria"/>
</dbReference>
<dbReference type="HOGENOM" id="CLU_001265_61_1_6"/>
<dbReference type="BioCyc" id="ECOL199310:C1950-MONOMER"/>
<dbReference type="Proteomes" id="UP000001410">
    <property type="component" value="Chromosome"/>
</dbReference>
<dbReference type="GO" id="GO:0005886">
    <property type="term" value="C:plasma membrane"/>
    <property type="evidence" value="ECO:0007669"/>
    <property type="project" value="UniProtKB-SubCell"/>
</dbReference>
<dbReference type="GO" id="GO:0015144">
    <property type="term" value="F:carbohydrate transmembrane transporter activity"/>
    <property type="evidence" value="ECO:0007669"/>
    <property type="project" value="UniProtKB-UniRule"/>
</dbReference>
<dbReference type="CDD" id="cd17324">
    <property type="entry name" value="MFS_NepI_like"/>
    <property type="match status" value="1"/>
</dbReference>
<dbReference type="FunFam" id="1.20.1250.20:FF:000079">
    <property type="entry name" value="Probable sugar efflux transporter"/>
    <property type="match status" value="1"/>
</dbReference>
<dbReference type="Gene3D" id="1.20.1250.20">
    <property type="entry name" value="MFS general substrate transporter like domains"/>
    <property type="match status" value="1"/>
</dbReference>
<dbReference type="HAMAP" id="MF_00517">
    <property type="entry name" value="MFS_SotB"/>
    <property type="match status" value="1"/>
</dbReference>
<dbReference type="InterPro" id="IPR011701">
    <property type="entry name" value="MFS"/>
</dbReference>
<dbReference type="InterPro" id="IPR020846">
    <property type="entry name" value="MFS_dom"/>
</dbReference>
<dbReference type="InterPro" id="IPR050189">
    <property type="entry name" value="MFS_Efflux_Transporters"/>
</dbReference>
<dbReference type="InterPro" id="IPR036259">
    <property type="entry name" value="MFS_trans_sf"/>
</dbReference>
<dbReference type="InterPro" id="IPR023495">
    <property type="entry name" value="Sugar_effux_transptr_put"/>
</dbReference>
<dbReference type="NCBIfam" id="NF002921">
    <property type="entry name" value="PRK03545.1"/>
    <property type="match status" value="1"/>
</dbReference>
<dbReference type="PANTHER" id="PTHR43124">
    <property type="entry name" value="PURINE EFFLUX PUMP PBUE"/>
    <property type="match status" value="1"/>
</dbReference>
<dbReference type="PANTHER" id="PTHR43124:SF4">
    <property type="entry name" value="SUGAR EFFLUX TRANSPORTER"/>
    <property type="match status" value="1"/>
</dbReference>
<dbReference type="Pfam" id="PF07690">
    <property type="entry name" value="MFS_1"/>
    <property type="match status" value="1"/>
</dbReference>
<dbReference type="SUPFAM" id="SSF103473">
    <property type="entry name" value="MFS general substrate transporter"/>
    <property type="match status" value="1"/>
</dbReference>
<dbReference type="PROSITE" id="PS50850">
    <property type="entry name" value="MFS"/>
    <property type="match status" value="1"/>
</dbReference>
<reference key="1">
    <citation type="journal article" date="2002" name="Proc. Natl. Acad. Sci. U.S.A.">
        <title>Extensive mosaic structure revealed by the complete genome sequence of uropathogenic Escherichia coli.</title>
        <authorList>
            <person name="Welch R.A."/>
            <person name="Burland V."/>
            <person name="Plunkett G. III"/>
            <person name="Redford P."/>
            <person name="Roesch P."/>
            <person name="Rasko D."/>
            <person name="Buckles E.L."/>
            <person name="Liou S.-R."/>
            <person name="Boutin A."/>
            <person name="Hackett J."/>
            <person name="Stroud D."/>
            <person name="Mayhew G.F."/>
            <person name="Rose D.J."/>
            <person name="Zhou S."/>
            <person name="Schwartz D.C."/>
            <person name="Perna N.T."/>
            <person name="Mobley H.L.T."/>
            <person name="Donnenberg M.S."/>
            <person name="Blattner F.R."/>
        </authorList>
    </citation>
    <scope>NUCLEOTIDE SEQUENCE [LARGE SCALE GENOMIC DNA]</scope>
    <source>
        <strain>CFT073 / ATCC 700928 / UPEC</strain>
    </source>
</reference>